<sequence>MSDRRAALESALRQIEKQFGKGSIMKLGEVSNIQISTASSGALALDIALGVGGFPRGRIVEIYGPESSGKTTVALHAIAEVQRQGGQAAFIDAEHALDPVYAAKLGVNIDELLLSQPDTGEQALEIAEALVRSGAVDIIVVDSVAALVPKAEIEGEMGDSHVGLQARLMSQALRKLSGAINKSKTIAIFINQLREKVGVMFGNPETTPGGRALKFYASVRLDVRKAESIKVGNDILGSKTKIKVVKNKVAPPFKVAEVDIMYGEGISREGSILDIGSEIDVVQKSGAWYSFNEERLGQGRENSKVFLKENPHIASQIETKVREYFSLNPSSVPEAEAEHDPEQDEEPTFDLE</sequence>
<organism>
    <name type="scientific">Brevibacillus brevis (strain 47 / JCM 6285 / NBRC 100599)</name>
    <dbReference type="NCBI Taxonomy" id="358681"/>
    <lineage>
        <taxon>Bacteria</taxon>
        <taxon>Bacillati</taxon>
        <taxon>Bacillota</taxon>
        <taxon>Bacilli</taxon>
        <taxon>Bacillales</taxon>
        <taxon>Paenibacillaceae</taxon>
        <taxon>Brevibacillus</taxon>
    </lineage>
</organism>
<name>RECA_BREBN</name>
<accession>C0ZF14</accession>
<gene>
    <name evidence="1" type="primary">recA</name>
    <name type="ordered locus">BBR47_33960</name>
</gene>
<comment type="function">
    <text evidence="1">Can catalyze the hydrolysis of ATP in the presence of single-stranded DNA, the ATP-dependent uptake of single-stranded DNA by duplex DNA, and the ATP-dependent hybridization of homologous single-stranded DNAs. It interacts with LexA causing its activation and leading to its autocatalytic cleavage.</text>
</comment>
<comment type="subcellular location">
    <subcellularLocation>
        <location evidence="1">Cytoplasm</location>
    </subcellularLocation>
</comment>
<comment type="similarity">
    <text evidence="1">Belongs to the RecA family.</text>
</comment>
<evidence type="ECO:0000255" key="1">
    <source>
        <dbReference type="HAMAP-Rule" id="MF_00268"/>
    </source>
</evidence>
<evidence type="ECO:0000256" key="2">
    <source>
        <dbReference type="SAM" id="MobiDB-lite"/>
    </source>
</evidence>
<reference key="1">
    <citation type="submission" date="2005-03" db="EMBL/GenBank/DDBJ databases">
        <title>Brevibacillus brevis strain 47, complete genome.</title>
        <authorList>
            <person name="Hosoyama A."/>
            <person name="Yamada R."/>
            <person name="Hongo Y."/>
            <person name="Terui Y."/>
            <person name="Ankai A."/>
            <person name="Masuyama W."/>
            <person name="Sekiguchi M."/>
            <person name="Takeda T."/>
            <person name="Asano K."/>
            <person name="Ohji S."/>
            <person name="Ichikawa N."/>
            <person name="Narita S."/>
            <person name="Aoki N."/>
            <person name="Miura H."/>
            <person name="Matsushita S."/>
            <person name="Sekigawa T."/>
            <person name="Yamagata H."/>
            <person name="Yoshikawa H."/>
            <person name="Udaka S."/>
            <person name="Tanikawa S."/>
            <person name="Fujita N."/>
        </authorList>
    </citation>
    <scope>NUCLEOTIDE SEQUENCE [LARGE SCALE GENOMIC DNA]</scope>
    <source>
        <strain>47 / JCM 6285 / NBRC 100599</strain>
    </source>
</reference>
<feature type="chain" id="PRO_1000193294" description="Protein RecA">
    <location>
        <begin position="1"/>
        <end position="352"/>
    </location>
</feature>
<feature type="region of interest" description="Disordered" evidence="2">
    <location>
        <begin position="328"/>
        <end position="352"/>
    </location>
</feature>
<feature type="compositionally biased region" description="Acidic residues" evidence="2">
    <location>
        <begin position="335"/>
        <end position="352"/>
    </location>
</feature>
<feature type="binding site" evidence="1">
    <location>
        <begin position="64"/>
        <end position="71"/>
    </location>
    <ligand>
        <name>ATP</name>
        <dbReference type="ChEBI" id="CHEBI:30616"/>
    </ligand>
</feature>
<dbReference type="EMBL" id="AP008955">
    <property type="protein sequence ID" value="BAH44373.1"/>
    <property type="molecule type" value="Genomic_DNA"/>
</dbReference>
<dbReference type="RefSeq" id="WP_015891678.1">
    <property type="nucleotide sequence ID" value="NC_012491.1"/>
</dbReference>
<dbReference type="SMR" id="C0ZF14"/>
<dbReference type="STRING" id="358681.BBR47_33960"/>
<dbReference type="KEGG" id="bbe:BBR47_33960"/>
<dbReference type="eggNOG" id="COG0468">
    <property type="taxonomic scope" value="Bacteria"/>
</dbReference>
<dbReference type="HOGENOM" id="CLU_040469_1_2_9"/>
<dbReference type="Proteomes" id="UP000001877">
    <property type="component" value="Chromosome"/>
</dbReference>
<dbReference type="GO" id="GO:0005829">
    <property type="term" value="C:cytosol"/>
    <property type="evidence" value="ECO:0007669"/>
    <property type="project" value="TreeGrafter"/>
</dbReference>
<dbReference type="GO" id="GO:0005524">
    <property type="term" value="F:ATP binding"/>
    <property type="evidence" value="ECO:0007669"/>
    <property type="project" value="UniProtKB-UniRule"/>
</dbReference>
<dbReference type="GO" id="GO:0016887">
    <property type="term" value="F:ATP hydrolysis activity"/>
    <property type="evidence" value="ECO:0007669"/>
    <property type="project" value="InterPro"/>
</dbReference>
<dbReference type="GO" id="GO:0140664">
    <property type="term" value="F:ATP-dependent DNA damage sensor activity"/>
    <property type="evidence" value="ECO:0007669"/>
    <property type="project" value="InterPro"/>
</dbReference>
<dbReference type="GO" id="GO:0003684">
    <property type="term" value="F:damaged DNA binding"/>
    <property type="evidence" value="ECO:0007669"/>
    <property type="project" value="UniProtKB-UniRule"/>
</dbReference>
<dbReference type="GO" id="GO:0003697">
    <property type="term" value="F:single-stranded DNA binding"/>
    <property type="evidence" value="ECO:0007669"/>
    <property type="project" value="UniProtKB-UniRule"/>
</dbReference>
<dbReference type="GO" id="GO:0006310">
    <property type="term" value="P:DNA recombination"/>
    <property type="evidence" value="ECO:0007669"/>
    <property type="project" value="UniProtKB-UniRule"/>
</dbReference>
<dbReference type="GO" id="GO:0006281">
    <property type="term" value="P:DNA repair"/>
    <property type="evidence" value="ECO:0007669"/>
    <property type="project" value="UniProtKB-UniRule"/>
</dbReference>
<dbReference type="GO" id="GO:0009432">
    <property type="term" value="P:SOS response"/>
    <property type="evidence" value="ECO:0007669"/>
    <property type="project" value="UniProtKB-UniRule"/>
</dbReference>
<dbReference type="CDD" id="cd00983">
    <property type="entry name" value="RecA"/>
    <property type="match status" value="1"/>
</dbReference>
<dbReference type="FunFam" id="3.40.50.300:FF:000087">
    <property type="entry name" value="Recombinase RecA"/>
    <property type="match status" value="1"/>
</dbReference>
<dbReference type="Gene3D" id="3.40.50.300">
    <property type="entry name" value="P-loop containing nucleotide triphosphate hydrolases"/>
    <property type="match status" value="1"/>
</dbReference>
<dbReference type="HAMAP" id="MF_00268">
    <property type="entry name" value="RecA"/>
    <property type="match status" value="1"/>
</dbReference>
<dbReference type="InterPro" id="IPR003593">
    <property type="entry name" value="AAA+_ATPase"/>
</dbReference>
<dbReference type="InterPro" id="IPR013765">
    <property type="entry name" value="DNA_recomb/repair_RecA"/>
</dbReference>
<dbReference type="InterPro" id="IPR020584">
    <property type="entry name" value="DNA_recomb/repair_RecA_CS"/>
</dbReference>
<dbReference type="InterPro" id="IPR027417">
    <property type="entry name" value="P-loop_NTPase"/>
</dbReference>
<dbReference type="InterPro" id="IPR049261">
    <property type="entry name" value="RecA-like_C"/>
</dbReference>
<dbReference type="InterPro" id="IPR049428">
    <property type="entry name" value="RecA-like_N"/>
</dbReference>
<dbReference type="InterPro" id="IPR020588">
    <property type="entry name" value="RecA_ATP-bd"/>
</dbReference>
<dbReference type="InterPro" id="IPR023400">
    <property type="entry name" value="RecA_C_sf"/>
</dbReference>
<dbReference type="InterPro" id="IPR020587">
    <property type="entry name" value="RecA_monomer-monomer_interface"/>
</dbReference>
<dbReference type="NCBIfam" id="TIGR02012">
    <property type="entry name" value="tigrfam_recA"/>
    <property type="match status" value="1"/>
</dbReference>
<dbReference type="PANTHER" id="PTHR45900:SF1">
    <property type="entry name" value="MITOCHONDRIAL DNA REPAIR PROTEIN RECA HOMOLOG-RELATED"/>
    <property type="match status" value="1"/>
</dbReference>
<dbReference type="PANTHER" id="PTHR45900">
    <property type="entry name" value="RECA"/>
    <property type="match status" value="1"/>
</dbReference>
<dbReference type="Pfam" id="PF00154">
    <property type="entry name" value="RecA"/>
    <property type="match status" value="1"/>
</dbReference>
<dbReference type="Pfam" id="PF21096">
    <property type="entry name" value="RecA_C"/>
    <property type="match status" value="1"/>
</dbReference>
<dbReference type="PRINTS" id="PR00142">
    <property type="entry name" value="RECA"/>
</dbReference>
<dbReference type="SMART" id="SM00382">
    <property type="entry name" value="AAA"/>
    <property type="match status" value="1"/>
</dbReference>
<dbReference type="SUPFAM" id="SSF52540">
    <property type="entry name" value="P-loop containing nucleoside triphosphate hydrolases"/>
    <property type="match status" value="1"/>
</dbReference>
<dbReference type="SUPFAM" id="SSF54752">
    <property type="entry name" value="RecA protein, C-terminal domain"/>
    <property type="match status" value="1"/>
</dbReference>
<dbReference type="PROSITE" id="PS00321">
    <property type="entry name" value="RECA_1"/>
    <property type="match status" value="1"/>
</dbReference>
<dbReference type="PROSITE" id="PS50162">
    <property type="entry name" value="RECA_2"/>
    <property type="match status" value="1"/>
</dbReference>
<dbReference type="PROSITE" id="PS50163">
    <property type="entry name" value="RECA_3"/>
    <property type="match status" value="1"/>
</dbReference>
<keyword id="KW-0067">ATP-binding</keyword>
<keyword id="KW-0963">Cytoplasm</keyword>
<keyword id="KW-0227">DNA damage</keyword>
<keyword id="KW-0233">DNA recombination</keyword>
<keyword id="KW-0234">DNA repair</keyword>
<keyword id="KW-0238">DNA-binding</keyword>
<keyword id="KW-0547">Nucleotide-binding</keyword>
<keyword id="KW-1185">Reference proteome</keyword>
<keyword id="KW-0742">SOS response</keyword>
<protein>
    <recommendedName>
        <fullName evidence="1">Protein RecA</fullName>
    </recommendedName>
    <alternativeName>
        <fullName evidence="1">Recombinase A</fullName>
    </alternativeName>
</protein>
<proteinExistence type="inferred from homology"/>